<proteinExistence type="evidence at protein level"/>
<comment type="cofactor">
    <cofactor evidence="1">
        <name>Zn(2+)</name>
        <dbReference type="ChEBI" id="CHEBI:29105"/>
    </cofactor>
</comment>
<comment type="similarity">
    <text evidence="3">Belongs to the peptidase M18 family.</text>
</comment>
<organism>
    <name type="scientific">Pseudomonas aeruginosa (strain ATCC 15692 / DSM 22644 / CIP 104116 / JCM 14847 / LMG 12228 / 1C / PRS 101 / PAO1)</name>
    <dbReference type="NCBI Taxonomy" id="208964"/>
    <lineage>
        <taxon>Bacteria</taxon>
        <taxon>Pseudomonadati</taxon>
        <taxon>Pseudomonadota</taxon>
        <taxon>Gammaproteobacteria</taxon>
        <taxon>Pseudomonadales</taxon>
        <taxon>Pseudomonadaceae</taxon>
        <taxon>Pseudomonas</taxon>
    </lineage>
</organism>
<reference key="1">
    <citation type="journal article" date="2000" name="Nature">
        <title>Complete genome sequence of Pseudomonas aeruginosa PAO1, an opportunistic pathogen.</title>
        <authorList>
            <person name="Stover C.K."/>
            <person name="Pham X.-Q.T."/>
            <person name="Erwin A.L."/>
            <person name="Mizoguchi S.D."/>
            <person name="Warrener P."/>
            <person name="Hickey M.J."/>
            <person name="Brinkman F.S.L."/>
            <person name="Hufnagle W.O."/>
            <person name="Kowalik D.J."/>
            <person name="Lagrou M."/>
            <person name="Garber R.L."/>
            <person name="Goltry L."/>
            <person name="Tolentino E."/>
            <person name="Westbrock-Wadman S."/>
            <person name="Yuan Y."/>
            <person name="Brody L.L."/>
            <person name="Coulter S.N."/>
            <person name="Folger K.R."/>
            <person name="Kas A."/>
            <person name="Larbig K."/>
            <person name="Lim R.M."/>
            <person name="Smith K.A."/>
            <person name="Spencer D.H."/>
            <person name="Wong G.K.-S."/>
            <person name="Wu Z."/>
            <person name="Paulsen I.T."/>
            <person name="Reizer J."/>
            <person name="Saier M.H. Jr."/>
            <person name="Hancock R.E.W."/>
            <person name="Lory S."/>
            <person name="Olson M.V."/>
        </authorList>
    </citation>
    <scope>NUCLEOTIDE SEQUENCE [LARGE SCALE GENOMIC DNA]</scope>
    <source>
        <strain>ATCC 15692 / DSM 22644 / CIP 104116 / JCM 14847 / LMG 12228 / 1C / PRS 101 / PAO1</strain>
    </source>
</reference>
<evidence type="ECO:0000250" key="1"/>
<evidence type="ECO:0000255" key="2"/>
<evidence type="ECO:0000305" key="3"/>
<evidence type="ECO:0007829" key="4">
    <source>
        <dbReference type="PDB" id="2IJZ"/>
    </source>
</evidence>
<evidence type="ECO:0007829" key="5">
    <source>
        <dbReference type="PDB" id="3WT4"/>
    </source>
</evidence>
<evidence type="ECO:0007829" key="6">
    <source>
        <dbReference type="PDB" id="4NJQ"/>
    </source>
</evidence>
<evidence type="ECO:0007829" key="7">
    <source>
        <dbReference type="PDB" id="4OID"/>
    </source>
</evidence>
<gene>
    <name type="primary">apeB</name>
    <name type="ordered locus">PA3247</name>
</gene>
<name>APEB_PSEAE</name>
<feature type="chain" id="PRO_0000173465" description="Probable M18 family aminopeptidase 2">
    <location>
        <begin position="1"/>
        <end position="429"/>
    </location>
</feature>
<feature type="binding site" evidence="2">
    <location>
        <position position="82"/>
    </location>
    <ligand>
        <name>Zn(2+)</name>
        <dbReference type="ChEBI" id="CHEBI:29105"/>
    </ligand>
</feature>
<feature type="binding site" evidence="2">
    <location>
        <position position="156"/>
    </location>
    <ligand>
        <name>Zn(2+)</name>
        <dbReference type="ChEBI" id="CHEBI:29105"/>
    </ligand>
</feature>
<feature type="binding site" evidence="2">
    <location>
        <position position="401"/>
    </location>
    <ligand>
        <name>Zn(2+)</name>
        <dbReference type="ChEBI" id="CHEBI:29105"/>
    </ligand>
</feature>
<feature type="helix" evidence="5">
    <location>
        <begin position="3"/>
        <end position="14"/>
    </location>
</feature>
<feature type="helix" evidence="5">
    <location>
        <begin position="19"/>
        <end position="32"/>
    </location>
</feature>
<feature type="strand" evidence="6">
    <location>
        <begin position="36"/>
        <end position="38"/>
    </location>
</feature>
<feature type="strand" evidence="5">
    <location>
        <begin position="51"/>
        <end position="56"/>
    </location>
</feature>
<feature type="turn" evidence="5">
    <location>
        <begin position="57"/>
        <end position="59"/>
    </location>
</feature>
<feature type="strand" evidence="5">
    <location>
        <begin position="60"/>
        <end position="65"/>
    </location>
</feature>
<feature type="helix" evidence="5">
    <location>
        <begin position="71"/>
        <end position="74"/>
    </location>
</feature>
<feature type="strand" evidence="5">
    <location>
        <begin position="76"/>
        <end position="83"/>
    </location>
</feature>
<feature type="strand" evidence="5">
    <location>
        <begin position="87"/>
        <end position="98"/>
    </location>
</feature>
<feature type="strand" evidence="5">
    <location>
        <begin position="101"/>
        <end position="111"/>
    </location>
</feature>
<feature type="helix" evidence="5">
    <location>
        <begin position="115"/>
        <end position="117"/>
    </location>
</feature>
<feature type="strand" evidence="5">
    <location>
        <begin position="122"/>
        <end position="132"/>
    </location>
</feature>
<feature type="strand" evidence="5">
    <location>
        <begin position="135"/>
        <end position="142"/>
    </location>
</feature>
<feature type="helix" evidence="5">
    <location>
        <begin position="155"/>
        <end position="157"/>
    </location>
</feature>
<feature type="helix" evidence="5">
    <location>
        <begin position="161"/>
        <end position="163"/>
    </location>
</feature>
<feature type="helix" evidence="5">
    <location>
        <begin position="169"/>
        <end position="172"/>
    </location>
</feature>
<feature type="strand" evidence="5">
    <location>
        <begin position="176"/>
        <end position="179"/>
    </location>
</feature>
<feature type="helix" evidence="5">
    <location>
        <begin position="188"/>
        <end position="200"/>
    </location>
</feature>
<feature type="strand" evidence="5">
    <location>
        <begin position="205"/>
        <end position="216"/>
    </location>
</feature>
<feature type="strand" evidence="5">
    <location>
        <begin position="221"/>
        <end position="224"/>
    </location>
</feature>
<feature type="strand" evidence="5">
    <location>
        <begin position="229"/>
        <end position="232"/>
    </location>
</feature>
<feature type="helix" evidence="5">
    <location>
        <begin position="235"/>
        <end position="250"/>
    </location>
</feature>
<feature type="strand" evidence="5">
    <location>
        <begin position="256"/>
        <end position="263"/>
    </location>
</feature>
<feature type="helix" evidence="5">
    <location>
        <begin position="265"/>
        <end position="267"/>
    </location>
</feature>
<feature type="strand" evidence="5">
    <location>
        <begin position="274"/>
        <end position="278"/>
    </location>
</feature>
<feature type="helix" evidence="5">
    <location>
        <begin position="279"/>
        <end position="285"/>
    </location>
</feature>
<feature type="strand" evidence="7">
    <location>
        <begin position="290"/>
        <end position="292"/>
    </location>
</feature>
<feature type="helix" evidence="5">
    <location>
        <begin position="293"/>
        <end position="298"/>
    </location>
</feature>
<feature type="strand" evidence="5">
    <location>
        <begin position="302"/>
        <end position="306"/>
    </location>
</feature>
<feature type="helix" evidence="5">
    <location>
        <begin position="317"/>
        <end position="319"/>
    </location>
</feature>
<feature type="helix" evidence="6">
    <location>
        <begin position="322"/>
        <end position="324"/>
    </location>
</feature>
<feature type="strand" evidence="4">
    <location>
        <begin position="327"/>
        <end position="329"/>
    </location>
</feature>
<feature type="strand" evidence="5">
    <location>
        <begin position="333"/>
        <end position="335"/>
    </location>
</feature>
<feature type="turn" evidence="5">
    <location>
        <begin position="338"/>
        <end position="341"/>
    </location>
</feature>
<feature type="helix" evidence="5">
    <location>
        <begin position="346"/>
        <end position="358"/>
    </location>
</feature>
<feature type="strand" evidence="5">
    <location>
        <begin position="364"/>
        <end position="366"/>
    </location>
</feature>
<feature type="helix" evidence="5">
    <location>
        <begin position="379"/>
        <end position="384"/>
    </location>
</feature>
<feature type="turn" evidence="5">
    <location>
        <begin position="385"/>
        <end position="387"/>
    </location>
</feature>
<feature type="strand" evidence="5">
    <location>
        <begin position="390"/>
        <end position="394"/>
    </location>
</feature>
<feature type="strand" evidence="5">
    <location>
        <begin position="396"/>
        <end position="399"/>
    </location>
</feature>
<feature type="strand" evidence="5">
    <location>
        <begin position="402"/>
        <end position="408"/>
    </location>
</feature>
<feature type="helix" evidence="5">
    <location>
        <begin position="411"/>
        <end position="423"/>
    </location>
</feature>
<keyword id="KW-0002">3D-structure</keyword>
<keyword id="KW-0031">Aminopeptidase</keyword>
<keyword id="KW-0378">Hydrolase</keyword>
<keyword id="KW-0479">Metal-binding</keyword>
<keyword id="KW-0482">Metalloprotease</keyword>
<keyword id="KW-0645">Protease</keyword>
<keyword id="KW-1185">Reference proteome</keyword>
<keyword id="KW-0862">Zinc</keyword>
<sequence>MRAELNQGLIDFLKASPTPFHATASLARRLEAAGYRRLDERDAWHTETGGRYYVTRNDSSLIAIRLGRRSPLESGFRLVGAHTDSPCLRVKPNPEIARNGFLQLGVEVYGGALFAPWFDRDLSLAGRVTFRANGKLESRLVDFRKAIAVIPNLAIHLNRAANEGWPINAQNELPPIIAQLAPGEAADFRLLLDEQLLREHGITADVVLDYELSFYDTQSAAVVGLNDEFIAGARLDNLLSCHAGLEALLNAEGDENCILVCTDHEEVGSCSHCGADGPFLEQVLRRLLPEGDAFSRAIQRSLLVSADNAHGVHPNYADRHDANHGPALNGGPVIKINSNQRYATNSETAGFFRHLCQDSEVPVQSFVTRSDMGCGSTIGPITASQVGVRTVDIGLPTFAMHSIRELAGSHDLAHLVKVLGAFYASSELP</sequence>
<protein>
    <recommendedName>
        <fullName>Probable M18 family aminopeptidase 2</fullName>
        <ecNumber>3.4.11.-</ecNumber>
    </recommendedName>
</protein>
<dbReference type="EC" id="3.4.11.-"/>
<dbReference type="EMBL" id="AE004091">
    <property type="protein sequence ID" value="AAG06635.1"/>
    <property type="molecule type" value="Genomic_DNA"/>
</dbReference>
<dbReference type="PIR" id="A83240">
    <property type="entry name" value="A83240"/>
</dbReference>
<dbReference type="RefSeq" id="NP_251937.1">
    <property type="nucleotide sequence ID" value="NC_002516.2"/>
</dbReference>
<dbReference type="RefSeq" id="WP_003114800.1">
    <property type="nucleotide sequence ID" value="NZ_QZGE01000019.1"/>
</dbReference>
<dbReference type="PDB" id="2IJZ">
    <property type="method" value="X-ray"/>
    <property type="resolution" value="3.00 A"/>
    <property type="chains" value="A/B/C/D/E/F/G/H/I/J/K/L=2-429"/>
</dbReference>
<dbReference type="PDB" id="3WT4">
    <property type="method" value="X-ray"/>
    <property type="resolution" value="2.30 A"/>
    <property type="chains" value="A/B/C/D=1-429"/>
</dbReference>
<dbReference type="PDB" id="4NJQ">
    <property type="method" value="X-ray"/>
    <property type="resolution" value="2.70 A"/>
    <property type="chains" value="A/B/C/D=1-429"/>
</dbReference>
<dbReference type="PDB" id="4NJR">
    <property type="method" value="X-ray"/>
    <property type="resolution" value="2.30 A"/>
    <property type="chains" value="A/B/C/D=1-429"/>
</dbReference>
<dbReference type="PDB" id="4OID">
    <property type="method" value="X-ray"/>
    <property type="resolution" value="2.30 A"/>
    <property type="chains" value="A/B/C/D=1-429"/>
</dbReference>
<dbReference type="PDB" id="4OIW">
    <property type="method" value="X-ray"/>
    <property type="resolution" value="2.44 A"/>
    <property type="chains" value="A/B/C/D/E/F=1-429"/>
</dbReference>
<dbReference type="PDBsum" id="2IJZ"/>
<dbReference type="PDBsum" id="3WT4"/>
<dbReference type="PDBsum" id="4NJQ"/>
<dbReference type="PDBsum" id="4NJR"/>
<dbReference type="PDBsum" id="4OID"/>
<dbReference type="PDBsum" id="4OIW"/>
<dbReference type="SMR" id="Q9HYZ3"/>
<dbReference type="STRING" id="208964.PA3247"/>
<dbReference type="PaxDb" id="208964-PA3247"/>
<dbReference type="GeneID" id="882410"/>
<dbReference type="KEGG" id="pae:PA3247"/>
<dbReference type="PATRIC" id="fig|208964.12.peg.3394"/>
<dbReference type="PseudoCAP" id="PA3247"/>
<dbReference type="HOGENOM" id="CLU_019532_2_0_6"/>
<dbReference type="InParanoid" id="Q9HYZ3"/>
<dbReference type="OrthoDB" id="5288740at2"/>
<dbReference type="PhylomeDB" id="Q9HYZ3"/>
<dbReference type="BioCyc" id="PAER208964:G1FZ6-3306-MONOMER"/>
<dbReference type="EvolutionaryTrace" id="Q9HYZ3"/>
<dbReference type="Proteomes" id="UP000002438">
    <property type="component" value="Chromosome"/>
</dbReference>
<dbReference type="GO" id="GO:0005737">
    <property type="term" value="C:cytoplasm"/>
    <property type="evidence" value="ECO:0007669"/>
    <property type="project" value="UniProtKB-ARBA"/>
</dbReference>
<dbReference type="GO" id="GO:0004177">
    <property type="term" value="F:aminopeptidase activity"/>
    <property type="evidence" value="ECO:0007669"/>
    <property type="project" value="UniProtKB-UniRule"/>
</dbReference>
<dbReference type="GO" id="GO:0008237">
    <property type="term" value="F:metallopeptidase activity"/>
    <property type="evidence" value="ECO:0007669"/>
    <property type="project" value="UniProtKB-UniRule"/>
</dbReference>
<dbReference type="GO" id="GO:0008270">
    <property type="term" value="F:zinc ion binding"/>
    <property type="evidence" value="ECO:0007669"/>
    <property type="project" value="UniProtKB-UniRule"/>
</dbReference>
<dbReference type="GO" id="GO:0006508">
    <property type="term" value="P:proteolysis"/>
    <property type="evidence" value="ECO:0007669"/>
    <property type="project" value="UniProtKB-UniRule"/>
</dbReference>
<dbReference type="CDD" id="cd05639">
    <property type="entry name" value="M18"/>
    <property type="match status" value="1"/>
</dbReference>
<dbReference type="FunFam" id="2.30.250.10:FF:000003">
    <property type="entry name" value="Probable M18 family aminopeptidase 2"/>
    <property type="match status" value="1"/>
</dbReference>
<dbReference type="Gene3D" id="2.30.250.10">
    <property type="entry name" value="Aminopeptidase i, Domain 2"/>
    <property type="match status" value="1"/>
</dbReference>
<dbReference type="Gene3D" id="3.40.630.10">
    <property type="entry name" value="Zn peptidases"/>
    <property type="match status" value="1"/>
</dbReference>
<dbReference type="HAMAP" id="MF_00467">
    <property type="entry name" value="Aminopeptidase_M18_2"/>
    <property type="match status" value="1"/>
</dbReference>
<dbReference type="InterPro" id="IPR022984">
    <property type="entry name" value="M18_aminopeptidase_2"/>
</dbReference>
<dbReference type="InterPro" id="IPR001948">
    <property type="entry name" value="Peptidase_M18"/>
</dbReference>
<dbReference type="InterPro" id="IPR023358">
    <property type="entry name" value="Peptidase_M18_dom2"/>
</dbReference>
<dbReference type="NCBIfam" id="NF002759">
    <property type="entry name" value="PRK02813.1"/>
    <property type="match status" value="1"/>
</dbReference>
<dbReference type="PANTHER" id="PTHR28570">
    <property type="entry name" value="ASPARTYL AMINOPEPTIDASE"/>
    <property type="match status" value="1"/>
</dbReference>
<dbReference type="PANTHER" id="PTHR28570:SF3">
    <property type="entry name" value="ASPARTYL AMINOPEPTIDASE"/>
    <property type="match status" value="1"/>
</dbReference>
<dbReference type="Pfam" id="PF02127">
    <property type="entry name" value="Peptidase_M18"/>
    <property type="match status" value="1"/>
</dbReference>
<dbReference type="PRINTS" id="PR00932">
    <property type="entry name" value="AMINO1PTASE"/>
</dbReference>
<dbReference type="SUPFAM" id="SSF101821">
    <property type="entry name" value="Aminopeptidase/glucanase lid domain"/>
    <property type="match status" value="1"/>
</dbReference>
<dbReference type="SUPFAM" id="SSF53187">
    <property type="entry name" value="Zn-dependent exopeptidases"/>
    <property type="match status" value="1"/>
</dbReference>
<accession>Q9HYZ3</accession>